<sequence>MSNQIKLLVGLANPGLEYKRTRHNAGAWVVEELARIHNIPMREEAKFFGLTGRIQTNGQDLRLLIPTTFMNLSGKAIASIAKFYQIKPEEILVAHDELDLPPGVAKFKKGGGHGGHNGLRDTISKLANTKEFYRLRIGIGHPGHKDKVAGFVLGKAPTKEQELIDAAVDESTRCLDILLKDGLSKAQNRLHTFKAE</sequence>
<accession>B6EHH0</accession>
<proteinExistence type="inferred from homology"/>
<reference key="1">
    <citation type="journal article" date="2008" name="BMC Genomics">
        <title>The genome sequence of the fish pathogen Aliivibrio salmonicida strain LFI1238 shows extensive evidence of gene decay.</title>
        <authorList>
            <person name="Hjerde E."/>
            <person name="Lorentzen M.S."/>
            <person name="Holden M.T."/>
            <person name="Seeger K."/>
            <person name="Paulsen S."/>
            <person name="Bason N."/>
            <person name="Churcher C."/>
            <person name="Harris D."/>
            <person name="Norbertczak H."/>
            <person name="Quail M.A."/>
            <person name="Sanders S."/>
            <person name="Thurston S."/>
            <person name="Parkhill J."/>
            <person name="Willassen N.P."/>
            <person name="Thomson N.R."/>
        </authorList>
    </citation>
    <scope>NUCLEOTIDE SEQUENCE [LARGE SCALE GENOMIC DNA]</scope>
    <source>
        <strain>LFI1238</strain>
    </source>
</reference>
<keyword id="KW-0963">Cytoplasm</keyword>
<keyword id="KW-0378">Hydrolase</keyword>
<keyword id="KW-0694">RNA-binding</keyword>
<keyword id="KW-0820">tRNA-binding</keyword>
<organism>
    <name type="scientific">Aliivibrio salmonicida (strain LFI1238)</name>
    <name type="common">Vibrio salmonicida (strain LFI1238)</name>
    <dbReference type="NCBI Taxonomy" id="316275"/>
    <lineage>
        <taxon>Bacteria</taxon>
        <taxon>Pseudomonadati</taxon>
        <taxon>Pseudomonadota</taxon>
        <taxon>Gammaproteobacteria</taxon>
        <taxon>Vibrionales</taxon>
        <taxon>Vibrionaceae</taxon>
        <taxon>Aliivibrio</taxon>
    </lineage>
</organism>
<feature type="chain" id="PRO_1000092904" description="Peptidyl-tRNA hydrolase">
    <location>
        <begin position="1"/>
        <end position="196"/>
    </location>
</feature>
<feature type="active site" description="Proton acceptor" evidence="1">
    <location>
        <position position="23"/>
    </location>
</feature>
<feature type="binding site" evidence="1">
    <location>
        <position position="18"/>
    </location>
    <ligand>
        <name>tRNA</name>
        <dbReference type="ChEBI" id="CHEBI:17843"/>
    </ligand>
</feature>
<feature type="binding site" evidence="1">
    <location>
        <position position="69"/>
    </location>
    <ligand>
        <name>tRNA</name>
        <dbReference type="ChEBI" id="CHEBI:17843"/>
    </ligand>
</feature>
<feature type="binding site" evidence="1">
    <location>
        <position position="71"/>
    </location>
    <ligand>
        <name>tRNA</name>
        <dbReference type="ChEBI" id="CHEBI:17843"/>
    </ligand>
</feature>
<feature type="binding site" evidence="1">
    <location>
        <position position="117"/>
    </location>
    <ligand>
        <name>tRNA</name>
        <dbReference type="ChEBI" id="CHEBI:17843"/>
    </ligand>
</feature>
<feature type="site" description="Discriminates between blocked and unblocked aminoacyl-tRNA" evidence="1">
    <location>
        <position position="13"/>
    </location>
</feature>
<feature type="site" description="Stabilizes the basic form of H active site to accept a proton" evidence="1">
    <location>
        <position position="96"/>
    </location>
</feature>
<dbReference type="EC" id="3.1.1.29" evidence="1"/>
<dbReference type="EMBL" id="FM178379">
    <property type="protein sequence ID" value="CAQ78470.1"/>
    <property type="molecule type" value="Genomic_DNA"/>
</dbReference>
<dbReference type="RefSeq" id="WP_012549578.1">
    <property type="nucleotide sequence ID" value="NC_011312.1"/>
</dbReference>
<dbReference type="SMR" id="B6EHH0"/>
<dbReference type="KEGG" id="vsa:VSAL_I0785"/>
<dbReference type="eggNOG" id="COG0193">
    <property type="taxonomic scope" value="Bacteria"/>
</dbReference>
<dbReference type="HOGENOM" id="CLU_062456_3_1_6"/>
<dbReference type="Proteomes" id="UP000001730">
    <property type="component" value="Chromosome 1"/>
</dbReference>
<dbReference type="GO" id="GO:0005737">
    <property type="term" value="C:cytoplasm"/>
    <property type="evidence" value="ECO:0007669"/>
    <property type="project" value="UniProtKB-SubCell"/>
</dbReference>
<dbReference type="GO" id="GO:0004045">
    <property type="term" value="F:peptidyl-tRNA hydrolase activity"/>
    <property type="evidence" value="ECO:0007669"/>
    <property type="project" value="UniProtKB-UniRule"/>
</dbReference>
<dbReference type="GO" id="GO:0000049">
    <property type="term" value="F:tRNA binding"/>
    <property type="evidence" value="ECO:0007669"/>
    <property type="project" value="UniProtKB-UniRule"/>
</dbReference>
<dbReference type="GO" id="GO:0006515">
    <property type="term" value="P:protein quality control for misfolded or incompletely synthesized proteins"/>
    <property type="evidence" value="ECO:0007669"/>
    <property type="project" value="UniProtKB-UniRule"/>
</dbReference>
<dbReference type="GO" id="GO:0072344">
    <property type="term" value="P:rescue of stalled ribosome"/>
    <property type="evidence" value="ECO:0007669"/>
    <property type="project" value="UniProtKB-UniRule"/>
</dbReference>
<dbReference type="CDD" id="cd00462">
    <property type="entry name" value="PTH"/>
    <property type="match status" value="1"/>
</dbReference>
<dbReference type="FunFam" id="3.40.50.1470:FF:000001">
    <property type="entry name" value="Peptidyl-tRNA hydrolase"/>
    <property type="match status" value="1"/>
</dbReference>
<dbReference type="Gene3D" id="3.40.50.1470">
    <property type="entry name" value="Peptidyl-tRNA hydrolase"/>
    <property type="match status" value="1"/>
</dbReference>
<dbReference type="HAMAP" id="MF_00083">
    <property type="entry name" value="Pept_tRNA_hydro_bact"/>
    <property type="match status" value="1"/>
</dbReference>
<dbReference type="InterPro" id="IPR001328">
    <property type="entry name" value="Pept_tRNA_hydro"/>
</dbReference>
<dbReference type="InterPro" id="IPR018171">
    <property type="entry name" value="Pept_tRNA_hydro_CS"/>
</dbReference>
<dbReference type="InterPro" id="IPR036416">
    <property type="entry name" value="Pept_tRNA_hydro_sf"/>
</dbReference>
<dbReference type="NCBIfam" id="TIGR00447">
    <property type="entry name" value="pth"/>
    <property type="match status" value="1"/>
</dbReference>
<dbReference type="PANTHER" id="PTHR17224">
    <property type="entry name" value="PEPTIDYL-TRNA HYDROLASE"/>
    <property type="match status" value="1"/>
</dbReference>
<dbReference type="PANTHER" id="PTHR17224:SF1">
    <property type="entry name" value="PEPTIDYL-TRNA HYDROLASE"/>
    <property type="match status" value="1"/>
</dbReference>
<dbReference type="Pfam" id="PF01195">
    <property type="entry name" value="Pept_tRNA_hydro"/>
    <property type="match status" value="1"/>
</dbReference>
<dbReference type="SUPFAM" id="SSF53178">
    <property type="entry name" value="Peptidyl-tRNA hydrolase-like"/>
    <property type="match status" value="1"/>
</dbReference>
<dbReference type="PROSITE" id="PS01195">
    <property type="entry name" value="PEPT_TRNA_HYDROL_1"/>
    <property type="match status" value="1"/>
</dbReference>
<dbReference type="PROSITE" id="PS01196">
    <property type="entry name" value="PEPT_TRNA_HYDROL_2"/>
    <property type="match status" value="1"/>
</dbReference>
<comment type="function">
    <text evidence="1">Hydrolyzes ribosome-free peptidyl-tRNAs (with 1 or more amino acids incorporated), which drop off the ribosome during protein synthesis, or as a result of ribosome stalling.</text>
</comment>
<comment type="function">
    <text evidence="1">Catalyzes the release of premature peptidyl moieties from peptidyl-tRNA molecules trapped in stalled 50S ribosomal subunits, and thus maintains levels of free tRNAs and 50S ribosomes.</text>
</comment>
<comment type="catalytic activity">
    <reaction evidence="1">
        <text>an N-acyl-L-alpha-aminoacyl-tRNA + H2O = an N-acyl-L-amino acid + a tRNA + H(+)</text>
        <dbReference type="Rhea" id="RHEA:54448"/>
        <dbReference type="Rhea" id="RHEA-COMP:10123"/>
        <dbReference type="Rhea" id="RHEA-COMP:13883"/>
        <dbReference type="ChEBI" id="CHEBI:15377"/>
        <dbReference type="ChEBI" id="CHEBI:15378"/>
        <dbReference type="ChEBI" id="CHEBI:59874"/>
        <dbReference type="ChEBI" id="CHEBI:78442"/>
        <dbReference type="ChEBI" id="CHEBI:138191"/>
        <dbReference type="EC" id="3.1.1.29"/>
    </reaction>
</comment>
<comment type="subunit">
    <text evidence="1">Monomer.</text>
</comment>
<comment type="subcellular location">
    <subcellularLocation>
        <location evidence="1">Cytoplasm</location>
    </subcellularLocation>
</comment>
<comment type="similarity">
    <text evidence="1">Belongs to the PTH family.</text>
</comment>
<gene>
    <name evidence="1" type="primary">pth</name>
    <name type="ordered locus">VSAL_I0785</name>
</gene>
<protein>
    <recommendedName>
        <fullName evidence="1">Peptidyl-tRNA hydrolase</fullName>
        <shortName evidence="1">Pth</shortName>
        <ecNumber evidence="1">3.1.1.29</ecNumber>
    </recommendedName>
</protein>
<name>PTH_ALISL</name>
<evidence type="ECO:0000255" key="1">
    <source>
        <dbReference type="HAMAP-Rule" id="MF_00083"/>
    </source>
</evidence>